<keyword id="KW-0548">Nucleotidyltransferase</keyword>
<keyword id="KW-0694">RNA-binding</keyword>
<keyword id="KW-0698">rRNA processing</keyword>
<keyword id="KW-0808">Transferase</keyword>
<keyword id="KW-0819">tRNA processing</keyword>
<keyword id="KW-0820">tRNA-binding</keyword>
<sequence>MRPSKRQFDEMRAISFERGVSKHAEGSCLVKFGDTHVLCTASLEEKVPGWMRNSGKGWVTAEYGMLPRSTGERMRREASAGKQGGRTLEIQRLIGRSLRAVVDLQALGEQQITVDCDVIQADGGTRTASITGGWVALYDCLRWMEARQMASVSKVLKDHVAAISCGIHDGQPVIDLDYLEDSAAGTDANFVMTGKGGIVEIQGTAEGEPFSEDQFAELMGLAKKGIQRLVSLQQMAVA</sequence>
<name>RNPH_RHILO</name>
<dbReference type="EC" id="2.7.7.56" evidence="1"/>
<dbReference type="EMBL" id="BA000012">
    <property type="protein sequence ID" value="BAB51234.1"/>
    <property type="molecule type" value="Genomic_DNA"/>
</dbReference>
<dbReference type="RefSeq" id="WP_010912576.1">
    <property type="nucleotide sequence ID" value="NC_002678.2"/>
</dbReference>
<dbReference type="SMR" id="Q98DN6"/>
<dbReference type="KEGG" id="mlo:mlr4622"/>
<dbReference type="PATRIC" id="fig|266835.9.peg.3654"/>
<dbReference type="eggNOG" id="COG0689">
    <property type="taxonomic scope" value="Bacteria"/>
</dbReference>
<dbReference type="HOGENOM" id="CLU_050858_0_0_5"/>
<dbReference type="Proteomes" id="UP000000552">
    <property type="component" value="Chromosome"/>
</dbReference>
<dbReference type="GO" id="GO:0000175">
    <property type="term" value="F:3'-5'-RNA exonuclease activity"/>
    <property type="evidence" value="ECO:0007669"/>
    <property type="project" value="UniProtKB-UniRule"/>
</dbReference>
<dbReference type="GO" id="GO:0000049">
    <property type="term" value="F:tRNA binding"/>
    <property type="evidence" value="ECO:0007669"/>
    <property type="project" value="UniProtKB-UniRule"/>
</dbReference>
<dbReference type="GO" id="GO:0009022">
    <property type="term" value="F:tRNA nucleotidyltransferase activity"/>
    <property type="evidence" value="ECO:0007669"/>
    <property type="project" value="UniProtKB-UniRule"/>
</dbReference>
<dbReference type="GO" id="GO:0016075">
    <property type="term" value="P:rRNA catabolic process"/>
    <property type="evidence" value="ECO:0007669"/>
    <property type="project" value="UniProtKB-UniRule"/>
</dbReference>
<dbReference type="GO" id="GO:0006364">
    <property type="term" value="P:rRNA processing"/>
    <property type="evidence" value="ECO:0007669"/>
    <property type="project" value="UniProtKB-KW"/>
</dbReference>
<dbReference type="GO" id="GO:0008033">
    <property type="term" value="P:tRNA processing"/>
    <property type="evidence" value="ECO:0007669"/>
    <property type="project" value="UniProtKB-UniRule"/>
</dbReference>
<dbReference type="CDD" id="cd11362">
    <property type="entry name" value="RNase_PH_bact"/>
    <property type="match status" value="1"/>
</dbReference>
<dbReference type="FunFam" id="3.30.230.70:FF:000003">
    <property type="entry name" value="Ribonuclease PH"/>
    <property type="match status" value="1"/>
</dbReference>
<dbReference type="Gene3D" id="3.30.230.70">
    <property type="entry name" value="GHMP Kinase, N-terminal domain"/>
    <property type="match status" value="1"/>
</dbReference>
<dbReference type="HAMAP" id="MF_00564">
    <property type="entry name" value="RNase_PH"/>
    <property type="match status" value="1"/>
</dbReference>
<dbReference type="InterPro" id="IPR001247">
    <property type="entry name" value="ExoRNase_PH_dom1"/>
</dbReference>
<dbReference type="InterPro" id="IPR015847">
    <property type="entry name" value="ExoRNase_PH_dom2"/>
</dbReference>
<dbReference type="InterPro" id="IPR036345">
    <property type="entry name" value="ExoRNase_PH_dom2_sf"/>
</dbReference>
<dbReference type="InterPro" id="IPR027408">
    <property type="entry name" value="PNPase/RNase_PH_dom_sf"/>
</dbReference>
<dbReference type="InterPro" id="IPR020568">
    <property type="entry name" value="Ribosomal_Su5_D2-typ_SF"/>
</dbReference>
<dbReference type="InterPro" id="IPR050080">
    <property type="entry name" value="RNase_PH"/>
</dbReference>
<dbReference type="InterPro" id="IPR002381">
    <property type="entry name" value="RNase_PH_bac-type"/>
</dbReference>
<dbReference type="InterPro" id="IPR018336">
    <property type="entry name" value="RNase_PH_CS"/>
</dbReference>
<dbReference type="NCBIfam" id="TIGR01966">
    <property type="entry name" value="RNasePH"/>
    <property type="match status" value="1"/>
</dbReference>
<dbReference type="PANTHER" id="PTHR11953">
    <property type="entry name" value="EXOSOME COMPLEX COMPONENT"/>
    <property type="match status" value="1"/>
</dbReference>
<dbReference type="PANTHER" id="PTHR11953:SF0">
    <property type="entry name" value="EXOSOME COMPLEX COMPONENT RRP41"/>
    <property type="match status" value="1"/>
</dbReference>
<dbReference type="Pfam" id="PF01138">
    <property type="entry name" value="RNase_PH"/>
    <property type="match status" value="1"/>
</dbReference>
<dbReference type="Pfam" id="PF03725">
    <property type="entry name" value="RNase_PH_C"/>
    <property type="match status" value="1"/>
</dbReference>
<dbReference type="SUPFAM" id="SSF55666">
    <property type="entry name" value="Ribonuclease PH domain 2-like"/>
    <property type="match status" value="1"/>
</dbReference>
<dbReference type="SUPFAM" id="SSF54211">
    <property type="entry name" value="Ribosomal protein S5 domain 2-like"/>
    <property type="match status" value="1"/>
</dbReference>
<dbReference type="PROSITE" id="PS01277">
    <property type="entry name" value="RIBONUCLEASE_PH"/>
    <property type="match status" value="1"/>
</dbReference>
<comment type="function">
    <text evidence="1">Phosphorolytic 3'-5' exoribonuclease that plays an important role in tRNA 3'-end maturation. Removes nucleotide residues following the 3'-CCA terminus of tRNAs; can also add nucleotides to the ends of RNA molecules by using nucleoside diphosphates as substrates, but this may not be physiologically important. Probably plays a role in initiation of 16S rRNA degradation (leading to ribosome degradation) during starvation.</text>
</comment>
<comment type="catalytic activity">
    <reaction evidence="1">
        <text>tRNA(n+1) + phosphate = tRNA(n) + a ribonucleoside 5'-diphosphate</text>
        <dbReference type="Rhea" id="RHEA:10628"/>
        <dbReference type="Rhea" id="RHEA-COMP:17343"/>
        <dbReference type="Rhea" id="RHEA-COMP:17344"/>
        <dbReference type="ChEBI" id="CHEBI:43474"/>
        <dbReference type="ChEBI" id="CHEBI:57930"/>
        <dbReference type="ChEBI" id="CHEBI:173114"/>
        <dbReference type="EC" id="2.7.7.56"/>
    </reaction>
</comment>
<comment type="subunit">
    <text evidence="1">Homohexameric ring arranged as a trimer of dimers.</text>
</comment>
<comment type="similarity">
    <text evidence="1">Belongs to the RNase PH family.</text>
</comment>
<feature type="chain" id="PRO_0000139928" description="Ribonuclease PH">
    <location>
        <begin position="1"/>
        <end position="238"/>
    </location>
</feature>
<feature type="binding site" evidence="1">
    <location>
        <position position="86"/>
    </location>
    <ligand>
        <name>phosphate</name>
        <dbReference type="ChEBI" id="CHEBI:43474"/>
        <note>substrate</note>
    </ligand>
</feature>
<feature type="binding site" evidence="1">
    <location>
        <begin position="124"/>
        <end position="126"/>
    </location>
    <ligand>
        <name>phosphate</name>
        <dbReference type="ChEBI" id="CHEBI:43474"/>
        <note>substrate</note>
    </ligand>
</feature>
<evidence type="ECO:0000255" key="1">
    <source>
        <dbReference type="HAMAP-Rule" id="MF_00564"/>
    </source>
</evidence>
<proteinExistence type="inferred from homology"/>
<protein>
    <recommendedName>
        <fullName evidence="1">Ribonuclease PH</fullName>
        <shortName evidence="1">RNase PH</shortName>
        <ecNumber evidence="1">2.7.7.56</ecNumber>
    </recommendedName>
    <alternativeName>
        <fullName evidence="1">tRNA nucleotidyltransferase</fullName>
    </alternativeName>
</protein>
<organism>
    <name type="scientific">Mesorhizobium japonicum (strain LMG 29417 / CECT 9101 / MAFF 303099)</name>
    <name type="common">Mesorhizobium loti (strain MAFF 303099)</name>
    <dbReference type="NCBI Taxonomy" id="266835"/>
    <lineage>
        <taxon>Bacteria</taxon>
        <taxon>Pseudomonadati</taxon>
        <taxon>Pseudomonadota</taxon>
        <taxon>Alphaproteobacteria</taxon>
        <taxon>Hyphomicrobiales</taxon>
        <taxon>Phyllobacteriaceae</taxon>
        <taxon>Mesorhizobium</taxon>
    </lineage>
</organism>
<reference key="1">
    <citation type="journal article" date="2000" name="DNA Res.">
        <title>Complete genome structure of the nitrogen-fixing symbiotic bacterium Mesorhizobium loti.</title>
        <authorList>
            <person name="Kaneko T."/>
            <person name="Nakamura Y."/>
            <person name="Sato S."/>
            <person name="Asamizu E."/>
            <person name="Kato T."/>
            <person name="Sasamoto S."/>
            <person name="Watanabe A."/>
            <person name="Idesawa K."/>
            <person name="Ishikawa A."/>
            <person name="Kawashima K."/>
            <person name="Kimura T."/>
            <person name="Kishida Y."/>
            <person name="Kiyokawa C."/>
            <person name="Kohara M."/>
            <person name="Matsumoto M."/>
            <person name="Matsuno A."/>
            <person name="Mochizuki Y."/>
            <person name="Nakayama S."/>
            <person name="Nakazaki N."/>
            <person name="Shimpo S."/>
            <person name="Sugimoto M."/>
            <person name="Takeuchi C."/>
            <person name="Yamada M."/>
            <person name="Tabata S."/>
        </authorList>
    </citation>
    <scope>NUCLEOTIDE SEQUENCE [LARGE SCALE GENOMIC DNA]</scope>
    <source>
        <strain>LMG 29417 / CECT 9101 / MAFF 303099</strain>
    </source>
</reference>
<accession>Q98DN6</accession>
<gene>
    <name evidence="1" type="primary">rph</name>
    <name type="ordered locus">mlr4622</name>
</gene>